<proteinExistence type="inferred from homology"/>
<organism>
    <name type="scientific">Influenza B virus (strain B/USSR/100/1983)</name>
    <dbReference type="NCBI Taxonomy" id="230286"/>
    <lineage>
        <taxon>Viruses</taxon>
        <taxon>Riboviria</taxon>
        <taxon>Orthornavirae</taxon>
        <taxon>Negarnaviricota</taxon>
        <taxon>Polyploviricotina</taxon>
        <taxon>Insthoviricetes</taxon>
        <taxon>Articulavirales</taxon>
        <taxon>Orthomyxoviridae</taxon>
        <taxon>Betainfluenzavirus</taxon>
        <taxon>Betainfluenzavirus influenzae</taxon>
        <taxon>Influenza B virus</taxon>
    </lineage>
</organism>
<dbReference type="EMBL" id="M30638">
    <property type="protein sequence ID" value="AAA43744.1"/>
    <property type="molecule type" value="Genomic_RNA"/>
</dbReference>
<dbReference type="PIR" id="E36825">
    <property type="entry name" value="E36825"/>
</dbReference>
<dbReference type="CAZy" id="GH34">
    <property type="family name" value="Glycoside Hydrolase Family 34"/>
</dbReference>
<dbReference type="GlyCosmos" id="P16206">
    <property type="glycosylation" value="2 sites, No reported glycans"/>
</dbReference>
<dbReference type="GO" id="GO:0033644">
    <property type="term" value="C:host cell membrane"/>
    <property type="evidence" value="ECO:0007669"/>
    <property type="project" value="UniProtKB-KW"/>
</dbReference>
<dbReference type="GO" id="GO:0016020">
    <property type="term" value="C:membrane"/>
    <property type="evidence" value="ECO:0007669"/>
    <property type="project" value="UniProtKB-KW"/>
</dbReference>
<dbReference type="GO" id="GO:0055036">
    <property type="term" value="C:virion membrane"/>
    <property type="evidence" value="ECO:0007669"/>
    <property type="project" value="UniProtKB-SubCell"/>
</dbReference>
<dbReference type="GO" id="GO:0015267">
    <property type="term" value="F:channel activity"/>
    <property type="evidence" value="ECO:0007669"/>
    <property type="project" value="UniProtKB-KW"/>
</dbReference>
<dbReference type="GO" id="GO:1902600">
    <property type="term" value="P:proton transmembrane transport"/>
    <property type="evidence" value="ECO:0007669"/>
    <property type="project" value="UniProtKB-KW"/>
</dbReference>
<dbReference type="InterPro" id="IPR007288">
    <property type="entry name" value="InfluenzaB_glycoprotein_NB"/>
</dbReference>
<dbReference type="Pfam" id="PF04159">
    <property type="entry name" value="NB"/>
    <property type="match status" value="1"/>
</dbReference>
<gene>
    <name type="primary">NB</name>
</gene>
<protein>
    <recommendedName>
        <fullName>Glycoprotein NB</fullName>
    </recommendedName>
</protein>
<evidence type="ECO:0000250" key="1"/>
<evidence type="ECO:0000255" key="2"/>
<evidence type="ECO:0000305" key="3"/>
<name>VNB_INBUS</name>
<feature type="chain" id="PRO_0000078913" description="Glycoprotein NB">
    <location>
        <begin position="1"/>
        <end position="100"/>
    </location>
</feature>
<feature type="topological domain" description="Virion surface" evidence="2">
    <location>
        <begin position="1"/>
        <end position="18"/>
    </location>
</feature>
<feature type="transmembrane region" description="Helical; Signal-anchor for type III membrane protein" evidence="2">
    <location>
        <begin position="19"/>
        <end position="40"/>
    </location>
</feature>
<feature type="topological domain" description="Intravirion" evidence="2">
    <location>
        <begin position="41"/>
        <end position="100"/>
    </location>
</feature>
<feature type="glycosylation site" description="N-linked (GlcNAc...) asparagine; by host" evidence="2">
    <location>
        <position position="3"/>
    </location>
</feature>
<feature type="glycosylation site" description="N-linked (GlcNAc...) asparagine; by host" evidence="2">
    <location>
        <position position="7"/>
    </location>
</feature>
<sequence length="100" mass="11001">MNNATFNHTNVNPISHIRGSVIITICVSFTVILTVFGYIAKIFTNKKNCTNNVIGLRERIKCSGCEPFCNKRDDISSPRTGVDIPSFILPGLNLSESTPN</sequence>
<organismHost>
    <name type="scientific">Homo sapiens</name>
    <name type="common">Human</name>
    <dbReference type="NCBI Taxonomy" id="9606"/>
</organismHost>
<reference key="1">
    <citation type="journal article" date="1990" name="Virology">
        <title>Antigenic, sequence, and crystal variation in influenza B neuraminidase.</title>
        <authorList>
            <person name="Air G.M."/>
            <person name="Laver W.G."/>
            <person name="Luo M."/>
            <person name="Stray S.J."/>
            <person name="Legrone G."/>
            <person name="Webster R.G."/>
        </authorList>
    </citation>
    <scope>NUCLEOTIDE SEQUENCE [GENOMIC RNA]</scope>
</reference>
<keyword id="KW-0325">Glycoprotein</keyword>
<keyword id="KW-0375">Hydrogen ion transport</keyword>
<keyword id="KW-0407">Ion channel</keyword>
<keyword id="KW-0406">Ion transport</keyword>
<keyword id="KW-0472">Membrane</keyword>
<keyword id="KW-0735">Signal-anchor</keyword>
<keyword id="KW-0812">Transmembrane</keyword>
<keyword id="KW-1133">Transmembrane helix</keyword>
<keyword id="KW-0813">Transport</keyword>
<keyword id="KW-1182">Viral ion channel</keyword>
<keyword id="KW-0946">Virion</keyword>
<comment type="function">
    <text evidence="1">Putative viral proton channel. May play a role in virus entry (By similarity).</text>
</comment>
<comment type="subunit">
    <text evidence="1">Dimer.</text>
</comment>
<comment type="subcellular location">
    <subcellularLocation>
        <location evidence="3">Virion membrane</location>
        <topology evidence="3">Single-pass type III membrane protein</topology>
    </subcellularLocation>
</comment>
<comment type="similarity">
    <text evidence="3">Belongs to the influenza viruses type B glycoprotein NB family.</text>
</comment>
<accession>P16206</accession>